<evidence type="ECO:0000255" key="1">
    <source>
        <dbReference type="HAMAP-Rule" id="MF_00117"/>
    </source>
</evidence>
<sequence length="291" mass="32483">MANNTLHRYLFEDLSVRGELVQLDDAYQQIISSKEYPKPVQNLLGELLVATTLLTATLKFEGSITLQLQGDGPVSLAVINGDNNQKVRGVARFEGDIAEDATLHQLMGRGYLVITITPKDGERYQGVVALEGENLAQCFEGYFERSEQLKTRLWLRLGEYEGKPHAAGMLLQVMPDGTGSENDFEHLEQLTDTIKNEELFGLPAEDVLYRLYNQDKVQLFEPQDVEFFCGCSRERSGGAIVTIDRAEVDDIIKTEGKISLHCDYCGTSYDFDSIDVANLFEQATSGNDTVH</sequence>
<reference key="1">
    <citation type="submission" date="2008-08" db="EMBL/GenBank/DDBJ databases">
        <title>Complete sequence of Vibrio fischeri strain MJ11.</title>
        <authorList>
            <person name="Mandel M.J."/>
            <person name="Stabb E.V."/>
            <person name="Ruby E.G."/>
            <person name="Ferriera S."/>
            <person name="Johnson J."/>
            <person name="Kravitz S."/>
            <person name="Beeson K."/>
            <person name="Sutton G."/>
            <person name="Rogers Y.-H."/>
            <person name="Friedman R."/>
            <person name="Frazier M."/>
            <person name="Venter J.C."/>
        </authorList>
    </citation>
    <scope>NUCLEOTIDE SEQUENCE [LARGE SCALE GENOMIC DNA]</scope>
    <source>
        <strain>MJ11</strain>
    </source>
</reference>
<name>HSLO_ALIFM</name>
<accession>B5FCE6</accession>
<dbReference type="EMBL" id="CP001139">
    <property type="protein sequence ID" value="ACH67386.1"/>
    <property type="molecule type" value="Genomic_DNA"/>
</dbReference>
<dbReference type="RefSeq" id="WP_005421430.1">
    <property type="nucleotide sequence ID" value="NC_011184.1"/>
</dbReference>
<dbReference type="SMR" id="B5FCE6"/>
<dbReference type="GeneID" id="54165207"/>
<dbReference type="KEGG" id="vfm:VFMJ11_2600"/>
<dbReference type="HOGENOM" id="CLU_054493_0_0_6"/>
<dbReference type="Proteomes" id="UP000001857">
    <property type="component" value="Chromosome I"/>
</dbReference>
<dbReference type="GO" id="GO:0005737">
    <property type="term" value="C:cytoplasm"/>
    <property type="evidence" value="ECO:0007669"/>
    <property type="project" value="UniProtKB-SubCell"/>
</dbReference>
<dbReference type="GO" id="GO:0044183">
    <property type="term" value="F:protein folding chaperone"/>
    <property type="evidence" value="ECO:0007669"/>
    <property type="project" value="TreeGrafter"/>
</dbReference>
<dbReference type="GO" id="GO:0051082">
    <property type="term" value="F:unfolded protein binding"/>
    <property type="evidence" value="ECO:0007669"/>
    <property type="project" value="UniProtKB-UniRule"/>
</dbReference>
<dbReference type="GO" id="GO:0042026">
    <property type="term" value="P:protein refolding"/>
    <property type="evidence" value="ECO:0007669"/>
    <property type="project" value="TreeGrafter"/>
</dbReference>
<dbReference type="CDD" id="cd00498">
    <property type="entry name" value="Hsp33"/>
    <property type="match status" value="1"/>
</dbReference>
<dbReference type="Gene3D" id="1.10.287.480">
    <property type="entry name" value="helix hairpin bin"/>
    <property type="match status" value="1"/>
</dbReference>
<dbReference type="Gene3D" id="3.55.30.10">
    <property type="entry name" value="Hsp33 domain"/>
    <property type="match status" value="1"/>
</dbReference>
<dbReference type="Gene3D" id="3.90.1280.10">
    <property type="entry name" value="HSP33 redox switch-like"/>
    <property type="match status" value="1"/>
</dbReference>
<dbReference type="HAMAP" id="MF_00117">
    <property type="entry name" value="HslO"/>
    <property type="match status" value="1"/>
</dbReference>
<dbReference type="InterPro" id="IPR000397">
    <property type="entry name" value="Heat_shock_Hsp33"/>
</dbReference>
<dbReference type="InterPro" id="IPR016154">
    <property type="entry name" value="Heat_shock_Hsp33_C"/>
</dbReference>
<dbReference type="InterPro" id="IPR016153">
    <property type="entry name" value="Heat_shock_Hsp33_N"/>
</dbReference>
<dbReference type="InterPro" id="IPR023212">
    <property type="entry name" value="Hsp33_helix_hairpin_bin_dom_sf"/>
</dbReference>
<dbReference type="NCBIfam" id="NF001033">
    <property type="entry name" value="PRK00114.1"/>
    <property type="match status" value="1"/>
</dbReference>
<dbReference type="PANTHER" id="PTHR30111">
    <property type="entry name" value="33 KDA CHAPERONIN"/>
    <property type="match status" value="1"/>
</dbReference>
<dbReference type="PANTHER" id="PTHR30111:SF1">
    <property type="entry name" value="33 KDA CHAPERONIN"/>
    <property type="match status" value="1"/>
</dbReference>
<dbReference type="Pfam" id="PF01430">
    <property type="entry name" value="HSP33"/>
    <property type="match status" value="1"/>
</dbReference>
<dbReference type="PIRSF" id="PIRSF005261">
    <property type="entry name" value="Heat_shock_Hsp33"/>
    <property type="match status" value="1"/>
</dbReference>
<dbReference type="SUPFAM" id="SSF64397">
    <property type="entry name" value="Hsp33 domain"/>
    <property type="match status" value="1"/>
</dbReference>
<dbReference type="SUPFAM" id="SSF118352">
    <property type="entry name" value="HSP33 redox switch-like"/>
    <property type="match status" value="1"/>
</dbReference>
<feature type="chain" id="PRO_1000095041" description="33 kDa chaperonin">
    <location>
        <begin position="1"/>
        <end position="291"/>
    </location>
</feature>
<feature type="disulfide bond" description="Redox-active" evidence="1">
    <location>
        <begin position="229"/>
        <end position="231"/>
    </location>
</feature>
<feature type="disulfide bond" description="Redox-active" evidence="1">
    <location>
        <begin position="262"/>
        <end position="265"/>
    </location>
</feature>
<proteinExistence type="inferred from homology"/>
<gene>
    <name evidence="1" type="primary">hslO</name>
    <name type="ordered locus">VFMJ11_2600</name>
</gene>
<protein>
    <recommendedName>
        <fullName evidence="1">33 kDa chaperonin</fullName>
    </recommendedName>
    <alternativeName>
        <fullName evidence="1">Heat shock protein 33 homolog</fullName>
        <shortName evidence="1">HSP33</shortName>
    </alternativeName>
</protein>
<comment type="function">
    <text evidence="1">Redox regulated molecular chaperone. Protects both thermally unfolding and oxidatively damaged proteins from irreversible aggregation. Plays an important role in the bacterial defense system toward oxidative stress.</text>
</comment>
<comment type="subcellular location">
    <subcellularLocation>
        <location evidence="1">Cytoplasm</location>
    </subcellularLocation>
</comment>
<comment type="PTM">
    <text evidence="1">Under oxidizing conditions two disulfide bonds are formed involving the reactive cysteines. Under reducing conditions zinc is bound to the reactive cysteines and the protein is inactive.</text>
</comment>
<comment type="similarity">
    <text evidence="1">Belongs to the HSP33 family.</text>
</comment>
<keyword id="KW-0143">Chaperone</keyword>
<keyword id="KW-0963">Cytoplasm</keyword>
<keyword id="KW-1015">Disulfide bond</keyword>
<keyword id="KW-0676">Redox-active center</keyword>
<keyword id="KW-0862">Zinc</keyword>
<organism>
    <name type="scientific">Aliivibrio fischeri (strain MJ11)</name>
    <name type="common">Vibrio fischeri</name>
    <dbReference type="NCBI Taxonomy" id="388396"/>
    <lineage>
        <taxon>Bacteria</taxon>
        <taxon>Pseudomonadati</taxon>
        <taxon>Pseudomonadota</taxon>
        <taxon>Gammaproteobacteria</taxon>
        <taxon>Vibrionales</taxon>
        <taxon>Vibrionaceae</taxon>
        <taxon>Aliivibrio</taxon>
    </lineage>
</organism>